<keyword id="KW-0238">DNA-binding</keyword>
<evidence type="ECO:0000255" key="1">
    <source>
        <dbReference type="HAMAP-Rule" id="MF_00984"/>
    </source>
</evidence>
<evidence type="ECO:0000256" key="2">
    <source>
        <dbReference type="SAM" id="MobiDB-lite"/>
    </source>
</evidence>
<sequence>MASKGVNKVILVGNLGQDPEVRYMPNGGAVVNLSLATSDTWTDKQTGDKKERTEWHRVVLYGKLAEIASEYLRKGSQVYIEGALRTRKWTDQSGVEKYTTEVVVSQSGTMQMLGGRNSAGSGQQQGGWGQPQQPAAPSHSGMPPQQHPANEPPMDFDDDIPFAPFGHSVARHALYVLS</sequence>
<feature type="chain" id="PRO_0000096091" description="Single-stranded DNA-binding protein 2">
    <location>
        <begin position="1"/>
        <end position="178"/>
    </location>
</feature>
<feature type="domain" description="SSB" evidence="1">
    <location>
        <begin position="6"/>
        <end position="111"/>
    </location>
</feature>
<feature type="DNA-binding region" evidence="1">
    <location>
        <begin position="55"/>
        <end position="61"/>
    </location>
</feature>
<feature type="region of interest" description="Disordered" evidence="2">
    <location>
        <begin position="111"/>
        <end position="161"/>
    </location>
</feature>
<organism>
    <name type="scientific">Salmonella typhi</name>
    <dbReference type="NCBI Taxonomy" id="90370"/>
    <lineage>
        <taxon>Bacteria</taxon>
        <taxon>Pseudomonadati</taxon>
        <taxon>Pseudomonadota</taxon>
        <taxon>Gammaproteobacteria</taxon>
        <taxon>Enterobacterales</taxon>
        <taxon>Enterobacteriaceae</taxon>
        <taxon>Salmonella</taxon>
    </lineage>
</organism>
<accession>Q9RHF4</accession>
<proteinExistence type="inferred from homology"/>
<reference key="1">
    <citation type="journal article" date="2000" name="Infect. Immun.">
        <title>Salmonella enterica serovar typhi uses type IVB pili to enter human intestinal epithelial cells.</title>
        <authorList>
            <person name="Zhang X.-L."/>
            <person name="Tsui I.S.M."/>
            <person name="Yip C.M.C."/>
            <person name="Fung A.W.Y."/>
            <person name="Wong D.K.-H."/>
            <person name="Dai X.-Y."/>
            <person name="Yang Y."/>
            <person name="Hackett J."/>
            <person name="Morris C."/>
        </authorList>
    </citation>
    <scope>NUCLEOTIDE SEQUENCE [GENOMIC DNA]</scope>
    <source>
        <strain>ATCC 700931 / Ty2</strain>
    </source>
</reference>
<reference key="2">
    <citation type="journal article" date="2001" name="Nature">
        <title>Complete genome sequence of a multiple drug resistant Salmonella enterica serovar Typhi CT18.</title>
        <authorList>
            <person name="Parkhill J."/>
            <person name="Dougan G."/>
            <person name="James K.D."/>
            <person name="Thomson N.R."/>
            <person name="Pickard D."/>
            <person name="Wain J."/>
            <person name="Churcher C.M."/>
            <person name="Mungall K.L."/>
            <person name="Bentley S.D."/>
            <person name="Holden M.T.G."/>
            <person name="Sebaihia M."/>
            <person name="Baker S."/>
            <person name="Basham D."/>
            <person name="Brooks K."/>
            <person name="Chillingworth T."/>
            <person name="Connerton P."/>
            <person name="Cronin A."/>
            <person name="Davis P."/>
            <person name="Davies R.M."/>
            <person name="Dowd L."/>
            <person name="White N."/>
            <person name="Farrar J."/>
            <person name="Feltwell T."/>
            <person name="Hamlin N."/>
            <person name="Haque A."/>
            <person name="Hien T.T."/>
            <person name="Holroyd S."/>
            <person name="Jagels K."/>
            <person name="Krogh A."/>
            <person name="Larsen T.S."/>
            <person name="Leather S."/>
            <person name="Moule S."/>
            <person name="O'Gaora P."/>
            <person name="Parry C."/>
            <person name="Quail M.A."/>
            <person name="Rutherford K.M."/>
            <person name="Simmonds M."/>
            <person name="Skelton J."/>
            <person name="Stevens K."/>
            <person name="Whitehead S."/>
            <person name="Barrell B.G."/>
        </authorList>
    </citation>
    <scope>NUCLEOTIDE SEQUENCE [LARGE SCALE GENOMIC DNA]</scope>
    <source>
        <strain>CT18</strain>
    </source>
</reference>
<reference key="3">
    <citation type="journal article" date="2003" name="J. Bacteriol.">
        <title>Comparative genomics of Salmonella enterica serovar Typhi strains Ty2 and CT18.</title>
        <authorList>
            <person name="Deng W."/>
            <person name="Liou S.-R."/>
            <person name="Plunkett G. III"/>
            <person name="Mayhew G.F."/>
            <person name="Rose D.J."/>
            <person name="Burland V."/>
            <person name="Kodoyianni V."/>
            <person name="Schwartz D.C."/>
            <person name="Blattner F.R."/>
        </authorList>
    </citation>
    <scope>NUCLEOTIDE SEQUENCE [LARGE SCALE GENOMIC DNA]</scope>
    <source>
        <strain>ATCC 700931 / Ty2</strain>
    </source>
</reference>
<gene>
    <name type="primary">ssb2</name>
    <name type="ordered locus">STY4536</name>
    <name type="ordered locus">t4237</name>
</gene>
<dbReference type="EMBL" id="AF000001">
    <property type="protein sequence ID" value="AAF14810.1"/>
    <property type="molecule type" value="Genomic_DNA"/>
</dbReference>
<dbReference type="EMBL" id="AL513382">
    <property type="protein sequence ID" value="CAD09315.1"/>
    <property type="molecule type" value="Genomic_DNA"/>
</dbReference>
<dbReference type="EMBL" id="AE014613">
    <property type="protein sequence ID" value="AAO71699.1"/>
    <property type="molecule type" value="Genomic_DNA"/>
</dbReference>
<dbReference type="RefSeq" id="NP_458627.1">
    <property type="nucleotide sequence ID" value="NC_003198.1"/>
</dbReference>
<dbReference type="RefSeq" id="WP_000157067.1">
    <property type="nucleotide sequence ID" value="NZ_WSUR01000022.1"/>
</dbReference>
<dbReference type="SMR" id="Q9RHF4"/>
<dbReference type="STRING" id="220341.gene:17588360"/>
<dbReference type="KEGG" id="stt:t4237"/>
<dbReference type="KEGG" id="sty:STY4536"/>
<dbReference type="PATRIC" id="fig|220341.7.peg.4638"/>
<dbReference type="eggNOG" id="COG0629">
    <property type="taxonomic scope" value="Bacteria"/>
</dbReference>
<dbReference type="HOGENOM" id="CLU_078758_0_2_6"/>
<dbReference type="OMA" id="KTQWHRI"/>
<dbReference type="OrthoDB" id="9809878at2"/>
<dbReference type="Proteomes" id="UP000000541">
    <property type="component" value="Chromosome"/>
</dbReference>
<dbReference type="Proteomes" id="UP000002670">
    <property type="component" value="Chromosome"/>
</dbReference>
<dbReference type="GO" id="GO:0009295">
    <property type="term" value="C:nucleoid"/>
    <property type="evidence" value="ECO:0007669"/>
    <property type="project" value="TreeGrafter"/>
</dbReference>
<dbReference type="GO" id="GO:0003697">
    <property type="term" value="F:single-stranded DNA binding"/>
    <property type="evidence" value="ECO:0007669"/>
    <property type="project" value="UniProtKB-UniRule"/>
</dbReference>
<dbReference type="GO" id="GO:0006260">
    <property type="term" value="P:DNA replication"/>
    <property type="evidence" value="ECO:0007669"/>
    <property type="project" value="InterPro"/>
</dbReference>
<dbReference type="CDD" id="cd04496">
    <property type="entry name" value="SSB_OBF"/>
    <property type="match status" value="1"/>
</dbReference>
<dbReference type="FunFam" id="2.40.50.140:FF:000065">
    <property type="entry name" value="Single-stranded DNA-binding protein"/>
    <property type="match status" value="1"/>
</dbReference>
<dbReference type="Gene3D" id="2.40.50.140">
    <property type="entry name" value="Nucleic acid-binding proteins"/>
    <property type="match status" value="1"/>
</dbReference>
<dbReference type="HAMAP" id="MF_00984">
    <property type="entry name" value="SSB"/>
    <property type="match status" value="1"/>
</dbReference>
<dbReference type="InterPro" id="IPR012340">
    <property type="entry name" value="NA-bd_OB-fold"/>
</dbReference>
<dbReference type="InterPro" id="IPR000424">
    <property type="entry name" value="Primosome_PriB/ssb"/>
</dbReference>
<dbReference type="InterPro" id="IPR011344">
    <property type="entry name" value="ssDNA-bd"/>
</dbReference>
<dbReference type="NCBIfam" id="NF006533">
    <property type="entry name" value="PRK09010.1"/>
    <property type="match status" value="1"/>
</dbReference>
<dbReference type="NCBIfam" id="TIGR00621">
    <property type="entry name" value="ssb"/>
    <property type="match status" value="1"/>
</dbReference>
<dbReference type="PANTHER" id="PTHR10302">
    <property type="entry name" value="SINGLE-STRANDED DNA-BINDING PROTEIN"/>
    <property type="match status" value="1"/>
</dbReference>
<dbReference type="PANTHER" id="PTHR10302:SF27">
    <property type="entry name" value="SINGLE-STRANDED DNA-BINDING PROTEIN"/>
    <property type="match status" value="1"/>
</dbReference>
<dbReference type="Pfam" id="PF00436">
    <property type="entry name" value="SSB"/>
    <property type="match status" value="1"/>
</dbReference>
<dbReference type="SUPFAM" id="SSF50249">
    <property type="entry name" value="Nucleic acid-binding proteins"/>
    <property type="match status" value="1"/>
</dbReference>
<dbReference type="PROSITE" id="PS50935">
    <property type="entry name" value="SSB"/>
    <property type="match status" value="1"/>
</dbReference>
<comment type="subunit">
    <text evidence="1">Homotetramer.</text>
</comment>
<name>SSB2_SALTI</name>
<protein>
    <recommendedName>
        <fullName evidence="1">Single-stranded DNA-binding protein 2</fullName>
        <shortName evidence="1">SSB 2</shortName>
    </recommendedName>
</protein>